<feature type="chain" id="PRO_0000126047" description="Small heat shock protein HspH">
    <location>
        <begin position="1"/>
        <end position="151"/>
    </location>
</feature>
<feature type="domain" description="sHSP" evidence="1">
    <location>
        <begin position="28"/>
        <end position="138"/>
    </location>
</feature>
<proteinExistence type="inferred from homology"/>
<organism>
    <name type="scientific">Bradyrhizobium diazoefficiens (strain JCM 10833 / BCRC 13528 / IAM 13628 / NBRC 14792 / USDA 110)</name>
    <dbReference type="NCBI Taxonomy" id="224911"/>
    <lineage>
        <taxon>Bacteria</taxon>
        <taxon>Pseudomonadati</taxon>
        <taxon>Pseudomonadota</taxon>
        <taxon>Alphaproteobacteria</taxon>
        <taxon>Hyphomicrobiales</taxon>
        <taxon>Nitrobacteraceae</taxon>
        <taxon>Bradyrhizobium</taxon>
    </lineage>
</organism>
<gene>
    <name type="primary">hspH</name>
    <name type="ordered locus">blr6571</name>
</gene>
<comment type="similarity">
    <text evidence="1">Belongs to the small heat shock protein (HSP20) family.</text>
</comment>
<name>HSPH_BRADU</name>
<keyword id="KW-1185">Reference proteome</keyword>
<keyword id="KW-0346">Stress response</keyword>
<sequence length="151" mass="17098">MRTYDFSPLWRSTIGFDRLFDLVETAQRAGEDNYPPYNIERVSEDRYQISLAIAGFSPDEVSVTAEQNAVIVEGNKADKAEREYLYRGISARPFKRQFNLADYVQVQSAAFENGLLKIELIREIPEAMKPRRIAINAAPSGTVHQLEGRAA</sequence>
<reference key="1">
    <citation type="submission" date="1998-08" db="EMBL/GenBank/DDBJ databases">
        <title>Occurrence of a superfamily of small heat shock proteins in Bradyrhizobium japonicum and other Rhizobium species: a plant-like phenomenon.</title>
        <authorList>
            <person name="Muenchbach M."/>
            <person name="Nocker A."/>
            <person name="Narberhaus F."/>
        </authorList>
    </citation>
    <scope>NUCLEOTIDE SEQUENCE [GENOMIC DNA]</scope>
</reference>
<reference key="2">
    <citation type="journal article" date="2002" name="DNA Res.">
        <title>Complete genomic sequence of nitrogen-fixing symbiotic bacterium Bradyrhizobium japonicum USDA110.</title>
        <authorList>
            <person name="Kaneko T."/>
            <person name="Nakamura Y."/>
            <person name="Sato S."/>
            <person name="Minamisawa K."/>
            <person name="Uchiumi T."/>
            <person name="Sasamoto S."/>
            <person name="Watanabe A."/>
            <person name="Idesawa K."/>
            <person name="Iriguchi M."/>
            <person name="Kawashima K."/>
            <person name="Kohara M."/>
            <person name="Matsumoto M."/>
            <person name="Shimpo S."/>
            <person name="Tsuruoka H."/>
            <person name="Wada T."/>
            <person name="Yamada M."/>
            <person name="Tabata S."/>
        </authorList>
    </citation>
    <scope>NUCLEOTIDE SEQUENCE [LARGE SCALE GENOMIC DNA]</scope>
    <source>
        <strain>JCM 10833 / BCRC 13528 / IAM 13628 / NBRC 14792 / USDA 110</strain>
    </source>
</reference>
<evidence type="ECO:0000255" key="1">
    <source>
        <dbReference type="PROSITE-ProRule" id="PRU00285"/>
    </source>
</evidence>
<protein>
    <recommendedName>
        <fullName>Small heat shock protein HspH</fullName>
    </recommendedName>
</protein>
<accession>O86110</accession>
<dbReference type="EMBL" id="AJ010144">
    <property type="protein sequence ID" value="CAA09014.1"/>
    <property type="molecule type" value="Genomic_DNA"/>
</dbReference>
<dbReference type="EMBL" id="BA000040">
    <property type="protein sequence ID" value="BAC51836.1"/>
    <property type="molecule type" value="Genomic_DNA"/>
</dbReference>
<dbReference type="RefSeq" id="NP_773211.1">
    <property type="nucleotide sequence ID" value="NC_004463.1"/>
</dbReference>
<dbReference type="RefSeq" id="WP_011089311.1">
    <property type="nucleotide sequence ID" value="NC_004463.1"/>
</dbReference>
<dbReference type="SMR" id="O86110"/>
<dbReference type="FunCoup" id="O86110">
    <property type="interactions" value="163"/>
</dbReference>
<dbReference type="STRING" id="224911.AAV28_30435"/>
<dbReference type="EnsemblBacteria" id="BAC51836">
    <property type="protein sequence ID" value="BAC51836"/>
    <property type="gene ID" value="BAC51836"/>
</dbReference>
<dbReference type="GeneID" id="46493544"/>
<dbReference type="KEGG" id="bja:blr6571"/>
<dbReference type="PATRIC" id="fig|224911.44.peg.6581"/>
<dbReference type="eggNOG" id="COG0071">
    <property type="taxonomic scope" value="Bacteria"/>
</dbReference>
<dbReference type="HOGENOM" id="CLU_046737_4_2_5"/>
<dbReference type="InParanoid" id="O86110"/>
<dbReference type="OrthoDB" id="9810618at2"/>
<dbReference type="PhylomeDB" id="O86110"/>
<dbReference type="Proteomes" id="UP000002526">
    <property type="component" value="Chromosome"/>
</dbReference>
<dbReference type="GO" id="GO:0005737">
    <property type="term" value="C:cytoplasm"/>
    <property type="evidence" value="ECO:0000318"/>
    <property type="project" value="GO_Central"/>
</dbReference>
<dbReference type="CDD" id="cd06470">
    <property type="entry name" value="ACD_IbpA-B_like"/>
    <property type="match status" value="1"/>
</dbReference>
<dbReference type="Gene3D" id="2.60.40.790">
    <property type="match status" value="1"/>
</dbReference>
<dbReference type="InterPro" id="IPR002068">
    <property type="entry name" value="A-crystallin/Hsp20_dom"/>
</dbReference>
<dbReference type="InterPro" id="IPR037913">
    <property type="entry name" value="ACD_IbpA/B"/>
</dbReference>
<dbReference type="InterPro" id="IPR008978">
    <property type="entry name" value="HSP20-like_chaperone"/>
</dbReference>
<dbReference type="PANTHER" id="PTHR47062">
    <property type="match status" value="1"/>
</dbReference>
<dbReference type="PANTHER" id="PTHR47062:SF1">
    <property type="entry name" value="SMALL HEAT SHOCK PROTEIN IBPA"/>
    <property type="match status" value="1"/>
</dbReference>
<dbReference type="Pfam" id="PF00011">
    <property type="entry name" value="HSP20"/>
    <property type="match status" value="1"/>
</dbReference>
<dbReference type="SUPFAM" id="SSF49764">
    <property type="entry name" value="HSP20-like chaperones"/>
    <property type="match status" value="1"/>
</dbReference>
<dbReference type="PROSITE" id="PS01031">
    <property type="entry name" value="SHSP"/>
    <property type="match status" value="1"/>
</dbReference>